<reference key="1">
    <citation type="journal article" date="2008" name="Environ. Microbiol.">
        <title>The genome of Erwinia tasmaniensis strain Et1/99, a non-pathogenic bacterium in the genus Erwinia.</title>
        <authorList>
            <person name="Kube M."/>
            <person name="Migdoll A.M."/>
            <person name="Mueller I."/>
            <person name="Kuhl H."/>
            <person name="Beck A."/>
            <person name="Reinhardt R."/>
            <person name="Geider K."/>
        </authorList>
    </citation>
    <scope>NUCLEOTIDE SEQUENCE [LARGE SCALE GENOMIC DNA]</scope>
    <source>
        <strain>DSM 17950 / CFBP 7177 / CIP 109463 / NCPPB 4357 / Et1/99</strain>
    </source>
</reference>
<dbReference type="EC" id="2.1.2.10" evidence="1"/>
<dbReference type="EMBL" id="CU468135">
    <property type="protein sequence ID" value="CAO97844.1"/>
    <property type="molecule type" value="Genomic_DNA"/>
</dbReference>
<dbReference type="RefSeq" id="WP_012442501.1">
    <property type="nucleotide sequence ID" value="NC_010694.1"/>
</dbReference>
<dbReference type="SMR" id="B2VF35"/>
<dbReference type="STRING" id="465817.ETA_27980"/>
<dbReference type="KEGG" id="eta:ETA_27980"/>
<dbReference type="eggNOG" id="COG0404">
    <property type="taxonomic scope" value="Bacteria"/>
</dbReference>
<dbReference type="HOGENOM" id="CLU_007884_10_2_6"/>
<dbReference type="OrthoDB" id="9774591at2"/>
<dbReference type="Proteomes" id="UP000001726">
    <property type="component" value="Chromosome"/>
</dbReference>
<dbReference type="GO" id="GO:0005829">
    <property type="term" value="C:cytosol"/>
    <property type="evidence" value="ECO:0007669"/>
    <property type="project" value="TreeGrafter"/>
</dbReference>
<dbReference type="GO" id="GO:0005960">
    <property type="term" value="C:glycine cleavage complex"/>
    <property type="evidence" value="ECO:0007669"/>
    <property type="project" value="InterPro"/>
</dbReference>
<dbReference type="GO" id="GO:0004047">
    <property type="term" value="F:aminomethyltransferase activity"/>
    <property type="evidence" value="ECO:0007669"/>
    <property type="project" value="UniProtKB-UniRule"/>
</dbReference>
<dbReference type="GO" id="GO:0008483">
    <property type="term" value="F:transaminase activity"/>
    <property type="evidence" value="ECO:0007669"/>
    <property type="project" value="UniProtKB-KW"/>
</dbReference>
<dbReference type="GO" id="GO:0019464">
    <property type="term" value="P:glycine decarboxylation via glycine cleavage system"/>
    <property type="evidence" value="ECO:0007669"/>
    <property type="project" value="UniProtKB-UniRule"/>
</dbReference>
<dbReference type="FunFam" id="2.40.30.110:FF:000001">
    <property type="entry name" value="Aminomethyltransferase"/>
    <property type="match status" value="1"/>
</dbReference>
<dbReference type="FunFam" id="3.30.70.1400:FF:000001">
    <property type="entry name" value="Aminomethyltransferase"/>
    <property type="match status" value="1"/>
</dbReference>
<dbReference type="FunFam" id="4.10.1250.10:FF:000001">
    <property type="entry name" value="Aminomethyltransferase"/>
    <property type="match status" value="1"/>
</dbReference>
<dbReference type="Gene3D" id="2.40.30.110">
    <property type="entry name" value="Aminomethyltransferase beta-barrel domains"/>
    <property type="match status" value="1"/>
</dbReference>
<dbReference type="Gene3D" id="3.30.70.1400">
    <property type="entry name" value="Aminomethyltransferase beta-barrel domains"/>
    <property type="match status" value="1"/>
</dbReference>
<dbReference type="Gene3D" id="4.10.1250.10">
    <property type="entry name" value="Aminomethyltransferase fragment"/>
    <property type="match status" value="1"/>
</dbReference>
<dbReference type="Gene3D" id="3.30.1360.120">
    <property type="entry name" value="Probable tRNA modification gtpase trme, domain 1"/>
    <property type="match status" value="1"/>
</dbReference>
<dbReference type="HAMAP" id="MF_00259">
    <property type="entry name" value="GcvT"/>
    <property type="match status" value="1"/>
</dbReference>
<dbReference type="InterPro" id="IPR006223">
    <property type="entry name" value="GCS_T"/>
</dbReference>
<dbReference type="InterPro" id="IPR022903">
    <property type="entry name" value="GCS_T_bac"/>
</dbReference>
<dbReference type="InterPro" id="IPR013977">
    <property type="entry name" value="GCST_C"/>
</dbReference>
<dbReference type="InterPro" id="IPR006222">
    <property type="entry name" value="GCV_T_N"/>
</dbReference>
<dbReference type="InterPro" id="IPR028896">
    <property type="entry name" value="GcvT/YgfZ/DmdA"/>
</dbReference>
<dbReference type="InterPro" id="IPR029043">
    <property type="entry name" value="GcvT/YgfZ_C"/>
</dbReference>
<dbReference type="InterPro" id="IPR027266">
    <property type="entry name" value="TrmE/GcvT_dom1"/>
</dbReference>
<dbReference type="NCBIfam" id="TIGR00528">
    <property type="entry name" value="gcvT"/>
    <property type="match status" value="1"/>
</dbReference>
<dbReference type="NCBIfam" id="NF001567">
    <property type="entry name" value="PRK00389.1"/>
    <property type="match status" value="1"/>
</dbReference>
<dbReference type="PANTHER" id="PTHR43757">
    <property type="entry name" value="AMINOMETHYLTRANSFERASE"/>
    <property type="match status" value="1"/>
</dbReference>
<dbReference type="PANTHER" id="PTHR43757:SF2">
    <property type="entry name" value="AMINOMETHYLTRANSFERASE, MITOCHONDRIAL"/>
    <property type="match status" value="1"/>
</dbReference>
<dbReference type="Pfam" id="PF01571">
    <property type="entry name" value="GCV_T"/>
    <property type="match status" value="1"/>
</dbReference>
<dbReference type="Pfam" id="PF08669">
    <property type="entry name" value="GCV_T_C"/>
    <property type="match status" value="1"/>
</dbReference>
<dbReference type="PIRSF" id="PIRSF006487">
    <property type="entry name" value="GcvT"/>
    <property type="match status" value="1"/>
</dbReference>
<dbReference type="SUPFAM" id="SSF101790">
    <property type="entry name" value="Aminomethyltransferase beta-barrel domain"/>
    <property type="match status" value="1"/>
</dbReference>
<dbReference type="SUPFAM" id="SSF103025">
    <property type="entry name" value="Folate-binding domain"/>
    <property type="match status" value="1"/>
</dbReference>
<feature type="chain" id="PRO_1000114094" description="Aminomethyltransferase">
    <location>
        <begin position="1"/>
        <end position="365"/>
    </location>
</feature>
<organism>
    <name type="scientific">Erwinia tasmaniensis (strain DSM 17950 / CFBP 7177 / CIP 109463 / NCPPB 4357 / Et1/99)</name>
    <dbReference type="NCBI Taxonomy" id="465817"/>
    <lineage>
        <taxon>Bacteria</taxon>
        <taxon>Pseudomonadati</taxon>
        <taxon>Pseudomonadota</taxon>
        <taxon>Gammaproteobacteria</taxon>
        <taxon>Enterobacterales</taxon>
        <taxon>Erwiniaceae</taxon>
        <taxon>Erwinia</taxon>
    </lineage>
</organism>
<evidence type="ECO:0000255" key="1">
    <source>
        <dbReference type="HAMAP-Rule" id="MF_00259"/>
    </source>
</evidence>
<gene>
    <name evidence="1" type="primary">gcvT</name>
    <name type="ordered locus">ETA_27980</name>
</gene>
<keyword id="KW-0032">Aminotransferase</keyword>
<keyword id="KW-1185">Reference proteome</keyword>
<keyword id="KW-0808">Transferase</keyword>
<proteinExistence type="inferred from homology"/>
<accession>B2VF35</accession>
<sequence>MTQQTPLFAQHQASGARMVDFHGWMMPLHYGSQMDEHHAVRRDAGMFDVSHMTIVDLHGARTREFLRYLLANDVAKLTQPGKALYSAMLNASAGVIDDLIVYFISEDFFRLVVNSATREKDLAWIVEHAAAYGVQLTERDDLSLIAVQGPNAQQKAQSVFDDAQRDAVSAMKPFFGVQAGELFIATTGYTGEPGYEIALPNELAAEFWQQLLAAGVRPAGLGARDTLRLEAGMNLYGQEMDEKVSPLAANMSWTIGWEPSDRQFIGREMLEIQRTKGTERLVGLIMTEKGVLRNALPVRFSDADGNMLEGVITSGSFSPTLGCSIALARVPAGIGEQAVVQIRNRAMPVTVTKPVFVRAGKPVTN</sequence>
<protein>
    <recommendedName>
        <fullName evidence="1">Aminomethyltransferase</fullName>
        <ecNumber evidence="1">2.1.2.10</ecNumber>
    </recommendedName>
    <alternativeName>
        <fullName evidence="1">Glycine cleavage system T protein</fullName>
    </alternativeName>
</protein>
<comment type="function">
    <text evidence="1">The glycine cleavage system catalyzes the degradation of glycine.</text>
</comment>
<comment type="catalytic activity">
    <reaction evidence="1">
        <text>N(6)-[(R)-S(8)-aminomethyldihydrolipoyl]-L-lysyl-[protein] + (6S)-5,6,7,8-tetrahydrofolate = N(6)-[(R)-dihydrolipoyl]-L-lysyl-[protein] + (6R)-5,10-methylene-5,6,7,8-tetrahydrofolate + NH4(+)</text>
        <dbReference type="Rhea" id="RHEA:16945"/>
        <dbReference type="Rhea" id="RHEA-COMP:10475"/>
        <dbReference type="Rhea" id="RHEA-COMP:10492"/>
        <dbReference type="ChEBI" id="CHEBI:15636"/>
        <dbReference type="ChEBI" id="CHEBI:28938"/>
        <dbReference type="ChEBI" id="CHEBI:57453"/>
        <dbReference type="ChEBI" id="CHEBI:83100"/>
        <dbReference type="ChEBI" id="CHEBI:83143"/>
        <dbReference type="EC" id="2.1.2.10"/>
    </reaction>
</comment>
<comment type="subunit">
    <text evidence="1">The glycine cleavage system is composed of four proteins: P, T, L and H.</text>
</comment>
<comment type="similarity">
    <text evidence="1">Belongs to the GcvT family.</text>
</comment>
<name>GCST_ERWT9</name>